<keyword id="KW-0378">Hydrolase</keyword>
<keyword id="KW-0479">Metal-binding</keyword>
<keyword id="KW-0482">Metalloprotease</keyword>
<keyword id="KW-0645">Protease</keyword>
<keyword id="KW-0862">Zinc</keyword>
<gene>
    <name type="ordered locus">Daro_3142</name>
</gene>
<dbReference type="EMBL" id="CP000089">
    <property type="protein sequence ID" value="AAZ47872.1"/>
    <property type="molecule type" value="Genomic_DNA"/>
</dbReference>
<dbReference type="SMR" id="Q47BA9"/>
<dbReference type="STRING" id="159087.Daro_3142"/>
<dbReference type="KEGG" id="dar:Daro_3142"/>
<dbReference type="eggNOG" id="COG2003">
    <property type="taxonomic scope" value="Bacteria"/>
</dbReference>
<dbReference type="HOGENOM" id="CLU_073529_0_2_4"/>
<dbReference type="OrthoDB" id="9804482at2"/>
<dbReference type="GO" id="GO:0046872">
    <property type="term" value="F:metal ion binding"/>
    <property type="evidence" value="ECO:0007669"/>
    <property type="project" value="UniProtKB-KW"/>
</dbReference>
<dbReference type="GO" id="GO:0008237">
    <property type="term" value="F:metallopeptidase activity"/>
    <property type="evidence" value="ECO:0007669"/>
    <property type="project" value="UniProtKB-KW"/>
</dbReference>
<dbReference type="GO" id="GO:0006508">
    <property type="term" value="P:proteolysis"/>
    <property type="evidence" value="ECO:0007669"/>
    <property type="project" value="UniProtKB-KW"/>
</dbReference>
<dbReference type="CDD" id="cd08071">
    <property type="entry name" value="MPN_DUF2466"/>
    <property type="match status" value="1"/>
</dbReference>
<dbReference type="Gene3D" id="1.10.150.20">
    <property type="entry name" value="5' to 3' exonuclease, C-terminal subdomain"/>
    <property type="match status" value="1"/>
</dbReference>
<dbReference type="Gene3D" id="3.40.140.10">
    <property type="entry name" value="Cytidine Deaminase, domain 2"/>
    <property type="match status" value="1"/>
</dbReference>
<dbReference type="InterPro" id="IPR037518">
    <property type="entry name" value="MPN"/>
</dbReference>
<dbReference type="InterPro" id="IPR025657">
    <property type="entry name" value="RadC_JAB"/>
</dbReference>
<dbReference type="InterPro" id="IPR010994">
    <property type="entry name" value="RuvA_2-like"/>
</dbReference>
<dbReference type="InterPro" id="IPR001405">
    <property type="entry name" value="UPF0758"/>
</dbReference>
<dbReference type="InterPro" id="IPR020891">
    <property type="entry name" value="UPF0758_CS"/>
</dbReference>
<dbReference type="InterPro" id="IPR046778">
    <property type="entry name" value="UPF0758_N"/>
</dbReference>
<dbReference type="NCBIfam" id="NF000642">
    <property type="entry name" value="PRK00024.1"/>
    <property type="match status" value="1"/>
</dbReference>
<dbReference type="NCBIfam" id="TIGR00608">
    <property type="entry name" value="radc"/>
    <property type="match status" value="1"/>
</dbReference>
<dbReference type="PANTHER" id="PTHR30471">
    <property type="entry name" value="DNA REPAIR PROTEIN RADC"/>
    <property type="match status" value="1"/>
</dbReference>
<dbReference type="PANTHER" id="PTHR30471:SF3">
    <property type="entry name" value="UPF0758 PROTEIN YEES-RELATED"/>
    <property type="match status" value="1"/>
</dbReference>
<dbReference type="Pfam" id="PF04002">
    <property type="entry name" value="RadC"/>
    <property type="match status" value="1"/>
</dbReference>
<dbReference type="Pfam" id="PF20582">
    <property type="entry name" value="UPF0758_N"/>
    <property type="match status" value="1"/>
</dbReference>
<dbReference type="SUPFAM" id="SSF47781">
    <property type="entry name" value="RuvA domain 2-like"/>
    <property type="match status" value="1"/>
</dbReference>
<dbReference type="PROSITE" id="PS50249">
    <property type="entry name" value="MPN"/>
    <property type="match status" value="1"/>
</dbReference>
<dbReference type="PROSITE" id="PS01302">
    <property type="entry name" value="UPF0758"/>
    <property type="match status" value="1"/>
</dbReference>
<evidence type="ECO:0000255" key="1">
    <source>
        <dbReference type="PROSITE-ProRule" id="PRU01182"/>
    </source>
</evidence>
<evidence type="ECO:0000305" key="2"/>
<sequence>MAITDWPEGERPRERLLAHGPAALSDAELLAIYLRVGVRGKSAVDLARDLLHRFDGRLGTLAEASLEELASVSGIGMAKAAQLKASFELTRRALSQEMATRDSFTSPGKVRDWLRLKLASRGHEVFMALWLDAQNQLLKAEELFTGTLTQTSVYPREVVKAALAHNAAAVILAHNHPSGIAEPSRADEMLTRSLKEALAMVDVKVLDHFIVAGNTPPLSFAERGLL</sequence>
<feature type="chain" id="PRO_1000001656" description="UPF0758 protein Daro_3142">
    <location>
        <begin position="1"/>
        <end position="226"/>
    </location>
</feature>
<feature type="domain" description="MPN" evidence="1">
    <location>
        <begin position="103"/>
        <end position="226"/>
    </location>
</feature>
<feature type="short sequence motif" description="JAMM motif" evidence="1">
    <location>
        <begin position="174"/>
        <end position="187"/>
    </location>
</feature>
<feature type="binding site" evidence="1">
    <location>
        <position position="174"/>
    </location>
    <ligand>
        <name>Zn(2+)</name>
        <dbReference type="ChEBI" id="CHEBI:29105"/>
        <note>catalytic</note>
    </ligand>
</feature>
<feature type="binding site" evidence="1">
    <location>
        <position position="176"/>
    </location>
    <ligand>
        <name>Zn(2+)</name>
        <dbReference type="ChEBI" id="CHEBI:29105"/>
        <note>catalytic</note>
    </ligand>
</feature>
<feature type="binding site" evidence="1">
    <location>
        <position position="187"/>
    </location>
    <ligand>
        <name>Zn(2+)</name>
        <dbReference type="ChEBI" id="CHEBI:29105"/>
        <note>catalytic</note>
    </ligand>
</feature>
<proteinExistence type="inferred from homology"/>
<reference key="1">
    <citation type="journal article" date="2009" name="BMC Genomics">
        <title>Metabolic analysis of the soil microbe Dechloromonas aromatica str. RCB: indications of a surprisingly complex life-style and cryptic anaerobic pathways for aromatic degradation.</title>
        <authorList>
            <person name="Salinero K.K."/>
            <person name="Keller K."/>
            <person name="Feil W.S."/>
            <person name="Feil H."/>
            <person name="Trong S."/>
            <person name="Di Bartolo G."/>
            <person name="Lapidus A."/>
        </authorList>
    </citation>
    <scope>NUCLEOTIDE SEQUENCE [LARGE SCALE GENOMIC DNA]</scope>
    <source>
        <strain>RCB</strain>
    </source>
</reference>
<protein>
    <recommendedName>
        <fullName>UPF0758 protein Daro_3142</fullName>
    </recommendedName>
</protein>
<organism>
    <name type="scientific">Dechloromonas aromatica (strain RCB)</name>
    <dbReference type="NCBI Taxonomy" id="159087"/>
    <lineage>
        <taxon>Bacteria</taxon>
        <taxon>Pseudomonadati</taxon>
        <taxon>Pseudomonadota</taxon>
        <taxon>Betaproteobacteria</taxon>
        <taxon>Rhodocyclales</taxon>
        <taxon>Azonexaceae</taxon>
        <taxon>Dechloromonas</taxon>
    </lineage>
</organism>
<name>Y3142_DECAR</name>
<accession>Q47BA9</accession>
<comment type="similarity">
    <text evidence="2">Belongs to the UPF0758 family.</text>
</comment>